<sequence length="271" mass="28190">MNRIQQTFAALAEQGRKGLIPFITAGDPDPAKTVEFMHALAEGGADVIELGVPFSDPMADGPVIQRSSERALARGVTLKSVLADVKRFRDTNQTTPVVLMGYANPIERMGVDAFATEAQAAGVDGVLVVDYPPEEAGVFAEKMRAAQIDPIFLLAPTSTDERIADVGKIASGYVYYVSLKGVTGAGNLDVSSIAGKIPAIKSRVPVPVGVGFGIRDAETARAVAEVSDAVVIGSRLVQLLESAAPEGAAAALKTFIAELRAALDGAGKTAR</sequence>
<keyword id="KW-0028">Amino-acid biosynthesis</keyword>
<keyword id="KW-0057">Aromatic amino acid biosynthesis</keyword>
<keyword id="KW-0456">Lyase</keyword>
<keyword id="KW-0822">Tryptophan biosynthesis</keyword>
<feature type="chain" id="PRO_1000095696" description="Tryptophan synthase alpha chain">
    <location>
        <begin position="1"/>
        <end position="271"/>
    </location>
</feature>
<feature type="active site" description="Proton acceptor" evidence="1">
    <location>
        <position position="49"/>
    </location>
</feature>
<feature type="active site" description="Proton acceptor" evidence="1">
    <location>
        <position position="60"/>
    </location>
</feature>
<evidence type="ECO:0000255" key="1">
    <source>
        <dbReference type="HAMAP-Rule" id="MF_00131"/>
    </source>
</evidence>
<name>TRPA_BURA4</name>
<gene>
    <name evidence="1" type="primary">trpA</name>
    <name type="ordered locus">BamMC406_3855</name>
</gene>
<reference key="1">
    <citation type="submission" date="2008-04" db="EMBL/GenBank/DDBJ databases">
        <title>Complete sequence of chromosome 2 of Burkholderia ambifaria MC40-6.</title>
        <authorList>
            <person name="Copeland A."/>
            <person name="Lucas S."/>
            <person name="Lapidus A."/>
            <person name="Glavina del Rio T."/>
            <person name="Dalin E."/>
            <person name="Tice H."/>
            <person name="Pitluck S."/>
            <person name="Chain P."/>
            <person name="Malfatti S."/>
            <person name="Shin M."/>
            <person name="Vergez L."/>
            <person name="Lang D."/>
            <person name="Schmutz J."/>
            <person name="Larimer F."/>
            <person name="Land M."/>
            <person name="Hauser L."/>
            <person name="Kyrpides N."/>
            <person name="Lykidis A."/>
            <person name="Ramette A."/>
            <person name="Konstantinidis K."/>
            <person name="Tiedje J."/>
            <person name="Richardson P."/>
        </authorList>
    </citation>
    <scope>NUCLEOTIDE SEQUENCE [LARGE SCALE GENOMIC DNA]</scope>
    <source>
        <strain>MC40-6</strain>
    </source>
</reference>
<comment type="function">
    <text evidence="1">The alpha subunit is responsible for the aldol cleavage of indoleglycerol phosphate to indole and glyceraldehyde 3-phosphate.</text>
</comment>
<comment type="catalytic activity">
    <reaction evidence="1">
        <text>(1S,2R)-1-C-(indol-3-yl)glycerol 3-phosphate + L-serine = D-glyceraldehyde 3-phosphate + L-tryptophan + H2O</text>
        <dbReference type="Rhea" id="RHEA:10532"/>
        <dbReference type="ChEBI" id="CHEBI:15377"/>
        <dbReference type="ChEBI" id="CHEBI:33384"/>
        <dbReference type="ChEBI" id="CHEBI:57912"/>
        <dbReference type="ChEBI" id="CHEBI:58866"/>
        <dbReference type="ChEBI" id="CHEBI:59776"/>
        <dbReference type="EC" id="4.2.1.20"/>
    </reaction>
</comment>
<comment type="pathway">
    <text evidence="1">Amino-acid biosynthesis; L-tryptophan biosynthesis; L-tryptophan from chorismate: step 5/5.</text>
</comment>
<comment type="subunit">
    <text evidence="1">Tetramer of two alpha and two beta chains.</text>
</comment>
<comment type="similarity">
    <text evidence="1">Belongs to the TrpA family.</text>
</comment>
<organism>
    <name type="scientific">Burkholderia ambifaria (strain MC40-6)</name>
    <dbReference type="NCBI Taxonomy" id="398577"/>
    <lineage>
        <taxon>Bacteria</taxon>
        <taxon>Pseudomonadati</taxon>
        <taxon>Pseudomonadota</taxon>
        <taxon>Betaproteobacteria</taxon>
        <taxon>Burkholderiales</taxon>
        <taxon>Burkholderiaceae</taxon>
        <taxon>Burkholderia</taxon>
        <taxon>Burkholderia cepacia complex</taxon>
    </lineage>
</organism>
<protein>
    <recommendedName>
        <fullName evidence="1">Tryptophan synthase alpha chain</fullName>
        <ecNumber evidence="1">4.2.1.20</ecNumber>
    </recommendedName>
</protein>
<proteinExistence type="inferred from homology"/>
<dbReference type="EC" id="4.2.1.20" evidence="1"/>
<dbReference type="EMBL" id="CP001026">
    <property type="protein sequence ID" value="ACB66322.1"/>
    <property type="molecule type" value="Genomic_DNA"/>
</dbReference>
<dbReference type="RefSeq" id="WP_012365697.1">
    <property type="nucleotide sequence ID" value="NC_010552.1"/>
</dbReference>
<dbReference type="SMR" id="B1Z1P1"/>
<dbReference type="KEGG" id="bac:BamMC406_3855"/>
<dbReference type="HOGENOM" id="CLU_016734_0_0_4"/>
<dbReference type="OrthoDB" id="9804578at2"/>
<dbReference type="UniPathway" id="UPA00035">
    <property type="reaction ID" value="UER00044"/>
</dbReference>
<dbReference type="Proteomes" id="UP000001680">
    <property type="component" value="Chromosome 2"/>
</dbReference>
<dbReference type="GO" id="GO:0005829">
    <property type="term" value="C:cytosol"/>
    <property type="evidence" value="ECO:0007669"/>
    <property type="project" value="TreeGrafter"/>
</dbReference>
<dbReference type="GO" id="GO:0004834">
    <property type="term" value="F:tryptophan synthase activity"/>
    <property type="evidence" value="ECO:0007669"/>
    <property type="project" value="UniProtKB-UniRule"/>
</dbReference>
<dbReference type="CDD" id="cd04724">
    <property type="entry name" value="Tryptophan_synthase_alpha"/>
    <property type="match status" value="1"/>
</dbReference>
<dbReference type="FunFam" id="3.20.20.70:FF:000037">
    <property type="entry name" value="Tryptophan synthase alpha chain"/>
    <property type="match status" value="1"/>
</dbReference>
<dbReference type="Gene3D" id="3.20.20.70">
    <property type="entry name" value="Aldolase class I"/>
    <property type="match status" value="1"/>
</dbReference>
<dbReference type="HAMAP" id="MF_00131">
    <property type="entry name" value="Trp_synth_alpha"/>
    <property type="match status" value="1"/>
</dbReference>
<dbReference type="InterPro" id="IPR013785">
    <property type="entry name" value="Aldolase_TIM"/>
</dbReference>
<dbReference type="InterPro" id="IPR011060">
    <property type="entry name" value="RibuloseP-bd_barrel"/>
</dbReference>
<dbReference type="InterPro" id="IPR018204">
    <property type="entry name" value="Trp_synthase_alpha_AS"/>
</dbReference>
<dbReference type="InterPro" id="IPR002028">
    <property type="entry name" value="Trp_synthase_suA"/>
</dbReference>
<dbReference type="NCBIfam" id="TIGR00262">
    <property type="entry name" value="trpA"/>
    <property type="match status" value="1"/>
</dbReference>
<dbReference type="PANTHER" id="PTHR43406:SF1">
    <property type="entry name" value="TRYPTOPHAN SYNTHASE ALPHA CHAIN, CHLOROPLASTIC"/>
    <property type="match status" value="1"/>
</dbReference>
<dbReference type="PANTHER" id="PTHR43406">
    <property type="entry name" value="TRYPTOPHAN SYNTHASE, ALPHA CHAIN"/>
    <property type="match status" value="1"/>
</dbReference>
<dbReference type="Pfam" id="PF00290">
    <property type="entry name" value="Trp_syntA"/>
    <property type="match status" value="1"/>
</dbReference>
<dbReference type="SUPFAM" id="SSF51366">
    <property type="entry name" value="Ribulose-phoshate binding barrel"/>
    <property type="match status" value="1"/>
</dbReference>
<dbReference type="PROSITE" id="PS00167">
    <property type="entry name" value="TRP_SYNTHASE_ALPHA"/>
    <property type="match status" value="1"/>
</dbReference>
<accession>B1Z1P1</accession>